<dbReference type="EMBL" id="AB011479">
    <property type="protein sequence ID" value="BAB11559.1"/>
    <property type="molecule type" value="Genomic_DNA"/>
</dbReference>
<dbReference type="EMBL" id="CP002688">
    <property type="protein sequence ID" value="AED98044.1"/>
    <property type="molecule type" value="Genomic_DNA"/>
</dbReference>
<dbReference type="RefSeq" id="NP_201340.1">
    <property type="nucleotide sequence ID" value="NM_125935.1"/>
</dbReference>
<dbReference type="SMR" id="Q9FKQ2"/>
<dbReference type="STRING" id="3702.Q9FKQ2"/>
<dbReference type="PaxDb" id="3702-AT5G65370.1"/>
<dbReference type="EnsemblPlants" id="AT5G65370.1">
    <property type="protein sequence ID" value="AT5G65370.1"/>
    <property type="gene ID" value="AT5G65370"/>
</dbReference>
<dbReference type="GeneID" id="836662"/>
<dbReference type="Gramene" id="AT5G65370.1">
    <property type="protein sequence ID" value="AT5G65370.1"/>
    <property type="gene ID" value="AT5G65370"/>
</dbReference>
<dbReference type="KEGG" id="ath:AT5G65370"/>
<dbReference type="Araport" id="AT5G65370"/>
<dbReference type="TAIR" id="AT5G65370">
    <property type="gene designation" value="PICALM10C"/>
</dbReference>
<dbReference type="eggNOG" id="KOG0251">
    <property type="taxonomic scope" value="Eukaryota"/>
</dbReference>
<dbReference type="HOGENOM" id="CLU_073451_0_0_1"/>
<dbReference type="InParanoid" id="Q9FKQ2"/>
<dbReference type="OMA" id="CIFKQID"/>
<dbReference type="PhylomeDB" id="Q9FKQ2"/>
<dbReference type="PRO" id="PR:Q9FKQ2"/>
<dbReference type="Proteomes" id="UP000006548">
    <property type="component" value="Chromosome 5"/>
</dbReference>
<dbReference type="ExpressionAtlas" id="Q9FKQ2">
    <property type="expression patterns" value="baseline and differential"/>
</dbReference>
<dbReference type="GO" id="GO:0005905">
    <property type="term" value="C:clathrin-coated pit"/>
    <property type="evidence" value="ECO:0007669"/>
    <property type="project" value="UniProtKB-SubCell"/>
</dbReference>
<dbReference type="GO" id="GO:0030136">
    <property type="term" value="C:clathrin-coated vesicle"/>
    <property type="evidence" value="ECO:0007669"/>
    <property type="project" value="UniProtKB-SubCell"/>
</dbReference>
<dbReference type="GO" id="GO:0005794">
    <property type="term" value="C:Golgi apparatus"/>
    <property type="evidence" value="ECO:0007669"/>
    <property type="project" value="UniProtKB-SubCell"/>
</dbReference>
<dbReference type="GO" id="GO:0005543">
    <property type="term" value="F:phospholipid binding"/>
    <property type="evidence" value="ECO:0007669"/>
    <property type="project" value="InterPro"/>
</dbReference>
<dbReference type="GO" id="GO:0048268">
    <property type="term" value="P:clathrin coat assembly"/>
    <property type="evidence" value="ECO:0007669"/>
    <property type="project" value="InterPro"/>
</dbReference>
<dbReference type="GO" id="GO:0072583">
    <property type="term" value="P:clathrin-dependent endocytosis"/>
    <property type="evidence" value="ECO:0007669"/>
    <property type="project" value="InterPro"/>
</dbReference>
<dbReference type="CDD" id="cd16987">
    <property type="entry name" value="ANTH_N_AP180_plant"/>
    <property type="match status" value="1"/>
</dbReference>
<dbReference type="FunFam" id="1.25.40.90:FF:000035">
    <property type="entry name" value="Putative clathrin assembly protein At4g40080"/>
    <property type="match status" value="1"/>
</dbReference>
<dbReference type="Gene3D" id="1.25.40.90">
    <property type="match status" value="1"/>
</dbReference>
<dbReference type="InterPro" id="IPR011417">
    <property type="entry name" value="ANTH_dom"/>
</dbReference>
<dbReference type="InterPro" id="IPR048050">
    <property type="entry name" value="ANTH_N_plant"/>
</dbReference>
<dbReference type="InterPro" id="IPR045192">
    <property type="entry name" value="AP180-like"/>
</dbReference>
<dbReference type="InterPro" id="IPR013809">
    <property type="entry name" value="ENTH"/>
</dbReference>
<dbReference type="InterPro" id="IPR008942">
    <property type="entry name" value="ENTH_VHS"/>
</dbReference>
<dbReference type="PANTHER" id="PTHR22951">
    <property type="entry name" value="CLATHRIN ASSEMBLY PROTEIN"/>
    <property type="match status" value="1"/>
</dbReference>
<dbReference type="PANTHER" id="PTHR22951:SF83">
    <property type="entry name" value="GENOME ASSEMBLY, CHROMOSOME: A02"/>
    <property type="match status" value="1"/>
</dbReference>
<dbReference type="Pfam" id="PF07651">
    <property type="entry name" value="ANTH"/>
    <property type="match status" value="1"/>
</dbReference>
<dbReference type="SUPFAM" id="SSF48464">
    <property type="entry name" value="ENTH/VHS domain"/>
    <property type="match status" value="1"/>
</dbReference>
<dbReference type="PROSITE" id="PS50942">
    <property type="entry name" value="ENTH"/>
    <property type="match status" value="1"/>
</dbReference>
<keyword id="KW-0168">Coated pit</keyword>
<keyword id="KW-0968">Cytoplasmic vesicle</keyword>
<keyword id="KW-0254">Endocytosis</keyword>
<keyword id="KW-0333">Golgi apparatus</keyword>
<keyword id="KW-0472">Membrane</keyword>
<keyword id="KW-1185">Reference proteome</keyword>
<sequence length="295" mass="33872">MGKLATLNGILKDEASQMKLNVVHLCSSVNAKTIDLALLKATSHTSNNPPSDKYVTFLQSTIDTCYGPDTVDAILHRLRVTTDVCVAAKCLILLHKMVKSESGYNGEDSLRNNINHRTLIYTQGGSNLKLNDLNVNSSRFTRELTPWVQWYKQYLDCYLSIAEVLGITPNIKEKNEDKRLETQRVSSYPMDCILKQIDFLVELFEHISDRPKAPQSKLNKIVIEMTELMVQDYFSAIRLMRIRFEELNVRVAKPNELVPVLEKLENCKEGLSEFSWRSKYLIADFWYLVSKLKDM</sequence>
<organism>
    <name type="scientific">Arabidopsis thaliana</name>
    <name type="common">Mouse-ear cress</name>
    <dbReference type="NCBI Taxonomy" id="3702"/>
    <lineage>
        <taxon>Eukaryota</taxon>
        <taxon>Viridiplantae</taxon>
        <taxon>Streptophyta</taxon>
        <taxon>Embryophyta</taxon>
        <taxon>Tracheophyta</taxon>
        <taxon>Spermatophyta</taxon>
        <taxon>Magnoliopsida</taxon>
        <taxon>eudicotyledons</taxon>
        <taxon>Gunneridae</taxon>
        <taxon>Pentapetalae</taxon>
        <taxon>rosids</taxon>
        <taxon>malvids</taxon>
        <taxon>Brassicales</taxon>
        <taxon>Brassicaceae</taxon>
        <taxon>Camelineae</taxon>
        <taxon>Arabidopsis</taxon>
    </lineage>
</organism>
<evidence type="ECO:0000250" key="1"/>
<evidence type="ECO:0000255" key="2">
    <source>
        <dbReference type="PROSITE-ProRule" id="PRU00243"/>
    </source>
</evidence>
<protein>
    <recommendedName>
        <fullName>Putative clathrin assembly protein At5g65370</fullName>
    </recommendedName>
</protein>
<proteinExistence type="inferred from homology"/>
<feature type="chain" id="PRO_0000187084" description="Putative clathrin assembly protein At5g65370">
    <location>
        <begin position="1"/>
        <end position="295"/>
    </location>
</feature>
<feature type="domain" description="ENTH" evidence="2">
    <location>
        <begin position="26"/>
        <end position="169"/>
    </location>
</feature>
<name>CAP18_ARATH</name>
<gene>
    <name type="ordered locus">At5g65370</name>
    <name type="ORF">MNA5.10</name>
</gene>
<accession>Q9FKQ2</accession>
<reference key="1">
    <citation type="journal article" date="1998" name="DNA Res.">
        <title>Structural analysis of Arabidopsis thaliana chromosome 5. V. Sequence features of the regions of 1,381,565 bp covered by twenty one physically assigned P1 and TAC clones.</title>
        <authorList>
            <person name="Kaneko T."/>
            <person name="Kotani H."/>
            <person name="Nakamura Y."/>
            <person name="Sato S."/>
            <person name="Asamizu E."/>
            <person name="Miyajima N."/>
            <person name="Tabata S."/>
        </authorList>
    </citation>
    <scope>NUCLEOTIDE SEQUENCE [LARGE SCALE GENOMIC DNA]</scope>
    <source>
        <strain>cv. Columbia</strain>
    </source>
</reference>
<reference key="2">
    <citation type="journal article" date="2017" name="Plant J.">
        <title>Araport11: a complete reannotation of the Arabidopsis thaliana reference genome.</title>
        <authorList>
            <person name="Cheng C.Y."/>
            <person name="Krishnakumar V."/>
            <person name="Chan A.P."/>
            <person name="Thibaud-Nissen F."/>
            <person name="Schobel S."/>
            <person name="Town C.D."/>
        </authorList>
    </citation>
    <scope>GENOME REANNOTATION</scope>
    <source>
        <strain>cv. Columbia</strain>
    </source>
</reference>
<comment type="subcellular location">
    <subcellularLocation>
        <location evidence="1">Membrane</location>
        <location evidence="1">Clathrin-coated pit</location>
    </subcellularLocation>
    <subcellularLocation>
        <location evidence="1">Golgi apparatus</location>
    </subcellularLocation>
    <subcellularLocation>
        <location evidence="1">Cytoplasmic vesicle</location>
        <location evidence="1">Clathrin-coated vesicle</location>
    </subcellularLocation>
    <text evidence="1">Colocalized with clathrin in the Golgi area.</text>
</comment>